<dbReference type="EMBL" id="CP001071">
    <property type="protein sequence ID" value="ACD04395.1"/>
    <property type="molecule type" value="Genomic_DNA"/>
</dbReference>
<dbReference type="RefSeq" id="WP_012419610.1">
    <property type="nucleotide sequence ID" value="NZ_CP071807.1"/>
</dbReference>
<dbReference type="SMR" id="B2UP25"/>
<dbReference type="STRING" id="349741.Amuc_0557"/>
<dbReference type="PaxDb" id="349741-Amuc_0557"/>
<dbReference type="GeneID" id="60880026"/>
<dbReference type="KEGG" id="amu:Amuc_0557"/>
<dbReference type="eggNOG" id="COG0199">
    <property type="taxonomic scope" value="Bacteria"/>
</dbReference>
<dbReference type="HOGENOM" id="CLU_139869_0_0_0"/>
<dbReference type="OrthoDB" id="9810484at2"/>
<dbReference type="BioCyc" id="AMUC349741:G1GBX-610-MONOMER"/>
<dbReference type="Proteomes" id="UP000001031">
    <property type="component" value="Chromosome"/>
</dbReference>
<dbReference type="GO" id="GO:0005737">
    <property type="term" value="C:cytoplasm"/>
    <property type="evidence" value="ECO:0007669"/>
    <property type="project" value="UniProtKB-ARBA"/>
</dbReference>
<dbReference type="GO" id="GO:0015935">
    <property type="term" value="C:small ribosomal subunit"/>
    <property type="evidence" value="ECO:0007669"/>
    <property type="project" value="TreeGrafter"/>
</dbReference>
<dbReference type="GO" id="GO:0019843">
    <property type="term" value="F:rRNA binding"/>
    <property type="evidence" value="ECO:0007669"/>
    <property type="project" value="UniProtKB-UniRule"/>
</dbReference>
<dbReference type="GO" id="GO:0003735">
    <property type="term" value="F:structural constituent of ribosome"/>
    <property type="evidence" value="ECO:0007669"/>
    <property type="project" value="InterPro"/>
</dbReference>
<dbReference type="GO" id="GO:0006412">
    <property type="term" value="P:translation"/>
    <property type="evidence" value="ECO:0007669"/>
    <property type="project" value="UniProtKB-UniRule"/>
</dbReference>
<dbReference type="Gene3D" id="4.10.830.10">
    <property type="entry name" value="30s Ribosomal Protein S14, Chain N"/>
    <property type="match status" value="1"/>
</dbReference>
<dbReference type="HAMAP" id="MF_00537">
    <property type="entry name" value="Ribosomal_uS14_1"/>
    <property type="match status" value="1"/>
</dbReference>
<dbReference type="InterPro" id="IPR001209">
    <property type="entry name" value="Ribosomal_uS14"/>
</dbReference>
<dbReference type="InterPro" id="IPR023036">
    <property type="entry name" value="Ribosomal_uS14_bac/plastid"/>
</dbReference>
<dbReference type="InterPro" id="IPR018271">
    <property type="entry name" value="Ribosomal_uS14_CS"/>
</dbReference>
<dbReference type="InterPro" id="IPR043140">
    <property type="entry name" value="Ribosomal_uS14_sf"/>
</dbReference>
<dbReference type="NCBIfam" id="NF006477">
    <property type="entry name" value="PRK08881.1"/>
    <property type="match status" value="1"/>
</dbReference>
<dbReference type="PANTHER" id="PTHR19836">
    <property type="entry name" value="30S RIBOSOMAL PROTEIN S14"/>
    <property type="match status" value="1"/>
</dbReference>
<dbReference type="PANTHER" id="PTHR19836:SF19">
    <property type="entry name" value="SMALL RIBOSOMAL SUBUNIT PROTEIN US14M"/>
    <property type="match status" value="1"/>
</dbReference>
<dbReference type="Pfam" id="PF00253">
    <property type="entry name" value="Ribosomal_S14"/>
    <property type="match status" value="1"/>
</dbReference>
<dbReference type="SUPFAM" id="SSF57716">
    <property type="entry name" value="Glucocorticoid receptor-like (DNA-binding domain)"/>
    <property type="match status" value="1"/>
</dbReference>
<dbReference type="PROSITE" id="PS00527">
    <property type="entry name" value="RIBOSOMAL_S14"/>
    <property type="match status" value="1"/>
</dbReference>
<protein>
    <recommendedName>
        <fullName evidence="1">Small ribosomal subunit protein uS14</fullName>
    </recommendedName>
    <alternativeName>
        <fullName evidence="2">30S ribosomal protein S14</fullName>
    </alternativeName>
</protein>
<feature type="chain" id="PRO_0000354378" description="Small ribosomal subunit protein uS14">
    <location>
        <begin position="1"/>
        <end position="89"/>
    </location>
</feature>
<proteinExistence type="inferred from homology"/>
<reference key="1">
    <citation type="journal article" date="2011" name="PLoS ONE">
        <title>The genome of Akkermansia muciniphila, a dedicated intestinal mucin degrader, and its use in exploring intestinal metagenomes.</title>
        <authorList>
            <person name="van Passel M.W."/>
            <person name="Kant R."/>
            <person name="Zoetendal E.G."/>
            <person name="Plugge C.M."/>
            <person name="Derrien M."/>
            <person name="Malfatti S.A."/>
            <person name="Chain P.S."/>
            <person name="Woyke T."/>
            <person name="Palva A."/>
            <person name="de Vos W.M."/>
            <person name="Smidt H."/>
        </authorList>
    </citation>
    <scope>NUCLEOTIDE SEQUENCE [LARGE SCALE GENOMIC DNA]</scope>
    <source>
        <strain>ATCC BAA-835 / DSM 22959 / JCM 33894 / BCRC 81048 / CCUG 64013 / CIP 107961 / Muc</strain>
    </source>
</reference>
<organism>
    <name type="scientific">Akkermansia muciniphila (strain ATCC BAA-835 / DSM 22959 / JCM 33894 / BCRC 81048 / CCUG 64013 / CIP 107961 / Muc)</name>
    <dbReference type="NCBI Taxonomy" id="349741"/>
    <lineage>
        <taxon>Bacteria</taxon>
        <taxon>Pseudomonadati</taxon>
        <taxon>Verrucomicrobiota</taxon>
        <taxon>Verrucomicrobiia</taxon>
        <taxon>Verrucomicrobiales</taxon>
        <taxon>Akkermansiaceae</taxon>
        <taxon>Akkermansia</taxon>
    </lineage>
</organism>
<gene>
    <name evidence="1" type="primary">rpsN</name>
    <name type="ordered locus">Amuc_0557</name>
</gene>
<comment type="function">
    <text evidence="1">Binds 16S rRNA, required for the assembly of 30S particles and may also be responsible for determining the conformation of the 16S rRNA at the A site.</text>
</comment>
<comment type="subunit">
    <text evidence="1">Part of the 30S ribosomal subunit. Contacts proteins S3 and S10.</text>
</comment>
<comment type="similarity">
    <text evidence="1">Belongs to the universal ribosomal protein uS14 family.</text>
</comment>
<accession>B2UP25</accession>
<name>RS14_AKKM8</name>
<evidence type="ECO:0000255" key="1">
    <source>
        <dbReference type="HAMAP-Rule" id="MF_00537"/>
    </source>
</evidence>
<evidence type="ECO:0000305" key="2"/>
<sequence>MAKKSWIARDKKKAETVKRYAELRAQLKAEKDYIGLTMLPRNASPTRTVNRCLVSGRRRAFIRRFKLSRISFRELANAGMIPGVTKSSW</sequence>
<keyword id="KW-1185">Reference proteome</keyword>
<keyword id="KW-0687">Ribonucleoprotein</keyword>
<keyword id="KW-0689">Ribosomal protein</keyword>
<keyword id="KW-0694">RNA-binding</keyword>
<keyword id="KW-0699">rRNA-binding</keyword>